<sequence length="254" mass="27679">MNSQFAGLTREACVALLASYPLSVGILAGQWIALHRYLQQLEALNQPLLHLDLMDGQFCPQFTVGPWAVEQLPQTFIKDVHLMVADQWTAAQACVKAGAHCITLQAEGDIHLHHTLSWLGQQTVPVIGGEMPVIRGISLCPATPLDVIIPILSDVEVIQLLAVNPGYGSKMRSSDLHERVAQLLCLLGDKREGKIIVIDGSLTQDQLPSLIAQGIDRVVSGSALFRDDRLAENTRSWRAMFKVAGDTTFLPSTA</sequence>
<name>LSRE_SALPA</name>
<protein>
    <recommendedName>
        <fullName>Putative epimerase LsrE</fullName>
        <ecNumber evidence="1">5.1.3.-</ecNumber>
    </recommendedName>
</protein>
<evidence type="ECO:0000250" key="1">
    <source>
        <dbReference type="UniProtKB" id="P32719"/>
    </source>
</evidence>
<evidence type="ECO:0000255" key="2"/>
<evidence type="ECO:0000305" key="3"/>
<organism>
    <name type="scientific">Salmonella paratyphi A (strain ATCC 9150 / SARB42)</name>
    <dbReference type="NCBI Taxonomy" id="295319"/>
    <lineage>
        <taxon>Bacteria</taxon>
        <taxon>Pseudomonadati</taxon>
        <taxon>Pseudomonadota</taxon>
        <taxon>Gammaproteobacteria</taxon>
        <taxon>Enterobacterales</taxon>
        <taxon>Enterobacteriaceae</taxon>
        <taxon>Salmonella</taxon>
    </lineage>
</organism>
<reference key="1">
    <citation type="journal article" date="2004" name="Nat. Genet.">
        <title>Comparison of genome degradation in Paratyphi A and Typhi, human-restricted serovars of Salmonella enterica that cause typhoid.</title>
        <authorList>
            <person name="McClelland M."/>
            <person name="Sanderson K.E."/>
            <person name="Clifton S.W."/>
            <person name="Latreille P."/>
            <person name="Porwollik S."/>
            <person name="Sabo A."/>
            <person name="Meyer R."/>
            <person name="Bieri T."/>
            <person name="Ozersky P."/>
            <person name="McLellan M."/>
            <person name="Harkins C.R."/>
            <person name="Wang C."/>
            <person name="Nguyen C."/>
            <person name="Berghoff A."/>
            <person name="Elliott G."/>
            <person name="Kohlberg S."/>
            <person name="Strong C."/>
            <person name="Du F."/>
            <person name="Carter J."/>
            <person name="Kremizki C."/>
            <person name="Layman D."/>
            <person name="Leonard S."/>
            <person name="Sun H."/>
            <person name="Fulton L."/>
            <person name="Nash W."/>
            <person name="Miner T."/>
            <person name="Minx P."/>
            <person name="Delehaunty K."/>
            <person name="Fronick C."/>
            <person name="Magrini V."/>
            <person name="Nhan M."/>
            <person name="Warren W."/>
            <person name="Florea L."/>
            <person name="Spieth J."/>
            <person name="Wilson R.K."/>
        </authorList>
    </citation>
    <scope>NUCLEOTIDE SEQUENCE [LARGE SCALE GENOMIC DNA]</scope>
    <source>
        <strain>ATCC 9150 / SARB42</strain>
    </source>
</reference>
<dbReference type="EC" id="5.1.3.-" evidence="1"/>
<dbReference type="EMBL" id="CP000026">
    <property type="protein sequence ID" value="AAV79688.1"/>
    <property type="molecule type" value="Genomic_DNA"/>
</dbReference>
<dbReference type="RefSeq" id="WP_001088041.1">
    <property type="nucleotide sequence ID" value="NC_006511.1"/>
</dbReference>
<dbReference type="SMR" id="Q5PJE1"/>
<dbReference type="KEGG" id="spt:SPA3923"/>
<dbReference type="HOGENOM" id="CLU_054856_3_0_6"/>
<dbReference type="Proteomes" id="UP000008185">
    <property type="component" value="Chromosome"/>
</dbReference>
<dbReference type="GO" id="GO:0005886">
    <property type="term" value="C:plasma membrane"/>
    <property type="evidence" value="ECO:0007669"/>
    <property type="project" value="UniProtKB-SubCell"/>
</dbReference>
<dbReference type="GO" id="GO:0046872">
    <property type="term" value="F:metal ion binding"/>
    <property type="evidence" value="ECO:0007669"/>
    <property type="project" value="UniProtKB-KW"/>
</dbReference>
<dbReference type="GO" id="GO:0016857">
    <property type="term" value="F:racemase and epimerase activity, acting on carbohydrates and derivatives"/>
    <property type="evidence" value="ECO:0007669"/>
    <property type="project" value="InterPro"/>
</dbReference>
<dbReference type="GO" id="GO:0005975">
    <property type="term" value="P:carbohydrate metabolic process"/>
    <property type="evidence" value="ECO:0007669"/>
    <property type="project" value="InterPro"/>
</dbReference>
<dbReference type="CDD" id="cd00429">
    <property type="entry name" value="RPE"/>
    <property type="match status" value="1"/>
</dbReference>
<dbReference type="FunFam" id="3.20.20.70:FF:000180">
    <property type="entry name" value="Epimerase"/>
    <property type="match status" value="1"/>
</dbReference>
<dbReference type="Gene3D" id="3.20.20.70">
    <property type="entry name" value="Aldolase class I"/>
    <property type="match status" value="1"/>
</dbReference>
<dbReference type="InterPro" id="IPR013785">
    <property type="entry name" value="Aldolase_TIM"/>
</dbReference>
<dbReference type="InterPro" id="IPR000056">
    <property type="entry name" value="Ribul_P_3_epim-like"/>
</dbReference>
<dbReference type="InterPro" id="IPR011060">
    <property type="entry name" value="RibuloseP-bd_barrel"/>
</dbReference>
<dbReference type="NCBIfam" id="NF010658">
    <property type="entry name" value="PRK14057.1"/>
    <property type="match status" value="1"/>
</dbReference>
<dbReference type="PANTHER" id="PTHR11749">
    <property type="entry name" value="RIBULOSE-5-PHOSPHATE-3-EPIMERASE"/>
    <property type="match status" value="1"/>
</dbReference>
<dbReference type="Pfam" id="PF00834">
    <property type="entry name" value="Ribul_P_3_epim"/>
    <property type="match status" value="1"/>
</dbReference>
<dbReference type="SUPFAM" id="SSF51366">
    <property type="entry name" value="Ribulose-phoshate binding barrel"/>
    <property type="match status" value="1"/>
</dbReference>
<accession>Q5PJE1</accession>
<gene>
    <name type="primary">lsrE</name>
    <name type="ordered locus">SPA3923</name>
</gene>
<keyword id="KW-1003">Cell membrane</keyword>
<keyword id="KW-0413">Isomerase</keyword>
<keyword id="KW-0472">Membrane</keyword>
<keyword id="KW-0479">Metal-binding</keyword>
<keyword id="KW-0812">Transmembrane</keyword>
<keyword id="KW-1133">Transmembrane helix</keyword>
<proteinExistence type="inferred from homology"/>
<comment type="cofactor">
    <cofactor evidence="1">
        <name>a divalent metal cation</name>
        <dbReference type="ChEBI" id="CHEBI:60240"/>
    </cofactor>
    <text evidence="1">Binds 1 divalent metal cation per subunit.</text>
</comment>
<comment type="subcellular location">
    <subcellularLocation>
        <location evidence="3">Cell membrane</location>
        <topology evidence="3">Single-pass membrane protein</topology>
    </subcellularLocation>
</comment>
<comment type="similarity">
    <text evidence="3">Belongs to the ribulose-phosphate 3-epimerase family.</text>
</comment>
<feature type="chain" id="PRO_0000351558" description="Putative epimerase LsrE">
    <location>
        <begin position="1"/>
        <end position="254"/>
    </location>
</feature>
<feature type="transmembrane region" description="Helical" evidence="2">
    <location>
        <begin position="14"/>
        <end position="34"/>
    </location>
</feature>
<feature type="active site" description="Proton acceptor" evidence="1">
    <location>
        <position position="52"/>
    </location>
</feature>
<feature type="active site" description="Proton donor" evidence="1">
    <location>
        <position position="199"/>
    </location>
</feature>
<feature type="binding site" evidence="1">
    <location>
        <position position="50"/>
    </location>
    <ligand>
        <name>a divalent metal cation</name>
        <dbReference type="ChEBI" id="CHEBI:60240"/>
    </ligand>
</feature>
<feature type="binding site" evidence="1">
    <location>
        <position position="52"/>
    </location>
    <ligand>
        <name>a divalent metal cation</name>
        <dbReference type="ChEBI" id="CHEBI:60240"/>
    </ligand>
</feature>
<feature type="binding site" evidence="1">
    <location>
        <position position="81"/>
    </location>
    <ligand>
        <name>a divalent metal cation</name>
        <dbReference type="ChEBI" id="CHEBI:60240"/>
    </ligand>
</feature>
<feature type="binding site" evidence="1">
    <location>
        <position position="81"/>
    </location>
    <ligand>
        <name>substrate</name>
    </ligand>
</feature>
<feature type="binding site" evidence="1">
    <location>
        <begin position="166"/>
        <end position="169"/>
    </location>
    <ligand>
        <name>substrate</name>
    </ligand>
</feature>
<feature type="binding site" evidence="1">
    <location>
        <begin position="199"/>
        <end position="201"/>
    </location>
    <ligand>
        <name>substrate</name>
    </ligand>
</feature>
<feature type="binding site" evidence="1">
    <location>
        <position position="199"/>
    </location>
    <ligand>
        <name>a divalent metal cation</name>
        <dbReference type="ChEBI" id="CHEBI:60240"/>
    </ligand>
</feature>
<feature type="binding site" evidence="1">
    <location>
        <begin position="221"/>
        <end position="222"/>
    </location>
    <ligand>
        <name>substrate</name>
    </ligand>
</feature>